<name>WFDC5_PAPAN</name>
<organism>
    <name type="scientific">Papio anubis</name>
    <name type="common">Olive baboon</name>
    <dbReference type="NCBI Taxonomy" id="9555"/>
    <lineage>
        <taxon>Eukaryota</taxon>
        <taxon>Metazoa</taxon>
        <taxon>Chordata</taxon>
        <taxon>Craniata</taxon>
        <taxon>Vertebrata</taxon>
        <taxon>Euteleostomi</taxon>
        <taxon>Mammalia</taxon>
        <taxon>Eutheria</taxon>
        <taxon>Euarchontoglires</taxon>
        <taxon>Primates</taxon>
        <taxon>Haplorrhini</taxon>
        <taxon>Catarrhini</taxon>
        <taxon>Cercopithecidae</taxon>
        <taxon>Cercopithecinae</taxon>
        <taxon>Papio</taxon>
    </lineage>
</organism>
<protein>
    <recommendedName>
        <fullName>WAP four-disulfide core domain protein 5</fullName>
    </recommendedName>
</protein>
<comment type="function">
    <text evidence="1">Putative acid-stable proteinase inhibitor.</text>
</comment>
<comment type="subcellular location">
    <subcellularLocation>
        <location evidence="4">Secreted</location>
    </subcellularLocation>
</comment>
<feature type="signal peptide" evidence="2">
    <location>
        <begin position="1"/>
        <end position="24"/>
    </location>
</feature>
<feature type="chain" id="PRO_0000289642" description="WAP four-disulfide core domain protein 5">
    <location>
        <begin position="25"/>
        <end position="123"/>
    </location>
</feature>
<feature type="domain" description="WAP 1" evidence="3">
    <location>
        <begin position="27"/>
        <end position="73"/>
    </location>
</feature>
<feature type="domain" description="WAP 2" evidence="3">
    <location>
        <begin position="74"/>
        <end position="121"/>
    </location>
</feature>
<feature type="disulfide bond" evidence="3">
    <location>
        <begin position="34"/>
        <end position="62"/>
    </location>
</feature>
<feature type="disulfide bond" evidence="3">
    <location>
        <begin position="41"/>
        <end position="66"/>
    </location>
</feature>
<feature type="disulfide bond" evidence="3">
    <location>
        <begin position="49"/>
        <end position="61"/>
    </location>
</feature>
<feature type="disulfide bond" evidence="3">
    <location>
        <begin position="55"/>
        <end position="70"/>
    </location>
</feature>
<feature type="disulfide bond" evidence="3">
    <location>
        <begin position="81"/>
        <end position="109"/>
    </location>
</feature>
<feature type="disulfide bond" evidence="3">
    <location>
        <begin position="88"/>
        <end position="113"/>
    </location>
</feature>
<feature type="disulfide bond" evidence="3">
    <location>
        <begin position="96"/>
        <end position="108"/>
    </location>
</feature>
<feature type="disulfide bond" evidence="3">
    <location>
        <begin position="102"/>
        <end position="117"/>
    </location>
</feature>
<reference key="1">
    <citation type="journal article" date="2007" name="Genome Res.">
        <title>Comparative sequence analyses reveal rapid and divergent evolutionary changes of the WFDC locus in the primate lineage.</title>
        <authorList>
            <consortium name="NISC comparative sequencing program"/>
            <person name="Hurle B."/>
            <person name="Swanson W."/>
            <person name="Green E.D."/>
        </authorList>
    </citation>
    <scope>NUCLEOTIDE SEQUENCE [GENOMIC DNA]</scope>
</reference>
<proteinExistence type="inferred from homology"/>
<evidence type="ECO:0000250" key="1"/>
<evidence type="ECO:0000255" key="2"/>
<evidence type="ECO:0000255" key="3">
    <source>
        <dbReference type="PROSITE-ProRule" id="PRU00722"/>
    </source>
</evidence>
<evidence type="ECO:0000305" key="4"/>
<sequence length="123" mass="13381">MRIQSLLLLGALLAVGSQLPAVFGRKKGEKWGGCPADDGPCLLSVPDQCVEDSQCPLTRKCCYRACFRQCVPRVSVKPGSCPQDQLRCLSPMNHLCHKDSDCSGKKRCCHSACGRDCRDPARG</sequence>
<dbReference type="EMBL" id="DP000036">
    <property type="protein sequence ID" value="ABO52908.1"/>
    <property type="molecule type" value="Genomic_DNA"/>
</dbReference>
<dbReference type="RefSeq" id="NP_001162494.1">
    <property type="nucleotide sequence ID" value="NM_001169023.1"/>
</dbReference>
<dbReference type="SMR" id="A4K2M5"/>
<dbReference type="STRING" id="9555.ENSPANP00000017671"/>
<dbReference type="GeneID" id="100137511"/>
<dbReference type="KEGG" id="panu:100137511"/>
<dbReference type="CTD" id="149708"/>
<dbReference type="eggNOG" id="ENOG502S99V">
    <property type="taxonomic scope" value="Eukaryota"/>
</dbReference>
<dbReference type="HOGENOM" id="CLU_105901_2_0_1"/>
<dbReference type="OrthoDB" id="13551at314294"/>
<dbReference type="Proteomes" id="UP000028761">
    <property type="component" value="Unplaced"/>
</dbReference>
<dbReference type="GO" id="GO:0005615">
    <property type="term" value="C:extracellular space"/>
    <property type="evidence" value="ECO:0007669"/>
    <property type="project" value="TreeGrafter"/>
</dbReference>
<dbReference type="GO" id="GO:0004867">
    <property type="term" value="F:serine-type endopeptidase inhibitor activity"/>
    <property type="evidence" value="ECO:0007669"/>
    <property type="project" value="UniProtKB-KW"/>
</dbReference>
<dbReference type="GO" id="GO:0019731">
    <property type="term" value="P:antibacterial humoral response"/>
    <property type="evidence" value="ECO:0007669"/>
    <property type="project" value="TreeGrafter"/>
</dbReference>
<dbReference type="GO" id="GO:0045087">
    <property type="term" value="P:innate immune response"/>
    <property type="evidence" value="ECO:0007669"/>
    <property type="project" value="TreeGrafter"/>
</dbReference>
<dbReference type="Gene3D" id="4.10.75.10">
    <property type="entry name" value="Elafin-like"/>
    <property type="match status" value="2"/>
</dbReference>
<dbReference type="InterPro" id="IPR036645">
    <property type="entry name" value="Elafin-like_sf"/>
</dbReference>
<dbReference type="InterPro" id="IPR008197">
    <property type="entry name" value="WAP_dom"/>
</dbReference>
<dbReference type="InterPro" id="IPR050514">
    <property type="entry name" value="WAP_four-disulfide_core"/>
</dbReference>
<dbReference type="PANTHER" id="PTHR19441:SF39">
    <property type="entry name" value="WAP FOUR-DISULFIDE CORE DOMAIN PROTEIN 5"/>
    <property type="match status" value="1"/>
</dbReference>
<dbReference type="PANTHER" id="PTHR19441">
    <property type="entry name" value="WHEY ACDIC PROTEIN WAP"/>
    <property type="match status" value="1"/>
</dbReference>
<dbReference type="Pfam" id="PF00095">
    <property type="entry name" value="WAP"/>
    <property type="match status" value="2"/>
</dbReference>
<dbReference type="PRINTS" id="PR00003">
    <property type="entry name" value="4DISULPHCORE"/>
</dbReference>
<dbReference type="SMART" id="SM00217">
    <property type="entry name" value="WAP"/>
    <property type="match status" value="2"/>
</dbReference>
<dbReference type="SUPFAM" id="SSF57256">
    <property type="entry name" value="Elafin-like"/>
    <property type="match status" value="2"/>
</dbReference>
<dbReference type="PROSITE" id="PS51390">
    <property type="entry name" value="WAP"/>
    <property type="match status" value="2"/>
</dbReference>
<gene>
    <name type="primary">WFDC5</name>
</gene>
<keyword id="KW-1015">Disulfide bond</keyword>
<keyword id="KW-0646">Protease inhibitor</keyword>
<keyword id="KW-1185">Reference proteome</keyword>
<keyword id="KW-0677">Repeat</keyword>
<keyword id="KW-0964">Secreted</keyword>
<keyword id="KW-0722">Serine protease inhibitor</keyword>
<keyword id="KW-0732">Signal</keyword>
<accession>A4K2M5</accession>